<evidence type="ECO:0000255" key="1">
    <source>
        <dbReference type="PROSITE-ProRule" id="PRU00159"/>
    </source>
</evidence>
<evidence type="ECO:0000255" key="2">
    <source>
        <dbReference type="PROSITE-ProRule" id="PRU10027"/>
    </source>
</evidence>
<evidence type="ECO:0000256" key="3">
    <source>
        <dbReference type="SAM" id="MobiDB-lite"/>
    </source>
</evidence>
<evidence type="ECO:0000269" key="4">
    <source>
    </source>
</evidence>
<evidence type="ECO:0000269" key="5">
    <source>
    </source>
</evidence>
<evidence type="ECO:0000269" key="6">
    <source>
    </source>
</evidence>
<evidence type="ECO:0007744" key="7">
    <source>
    </source>
</evidence>
<evidence type="ECO:0007744" key="8">
    <source>
    </source>
</evidence>
<evidence type="ECO:0007744" key="9">
    <source>
    </source>
</evidence>
<accession>Q08732</accession>
<accession>D6W2W7</accession>
<accession>Q07224</accession>
<comment type="function">
    <text evidence="4">Involved in regulating the activity of the plasma membrane proton pump PMA1.</text>
</comment>
<comment type="catalytic activity">
    <reaction>
        <text>L-seryl-[protein] + ATP = O-phospho-L-seryl-[protein] + ADP + H(+)</text>
        <dbReference type="Rhea" id="RHEA:17989"/>
        <dbReference type="Rhea" id="RHEA-COMP:9863"/>
        <dbReference type="Rhea" id="RHEA-COMP:11604"/>
        <dbReference type="ChEBI" id="CHEBI:15378"/>
        <dbReference type="ChEBI" id="CHEBI:29999"/>
        <dbReference type="ChEBI" id="CHEBI:30616"/>
        <dbReference type="ChEBI" id="CHEBI:83421"/>
        <dbReference type="ChEBI" id="CHEBI:456216"/>
        <dbReference type="EC" id="2.7.11.1"/>
    </reaction>
</comment>
<comment type="catalytic activity">
    <reaction>
        <text>L-threonyl-[protein] + ATP = O-phospho-L-threonyl-[protein] + ADP + H(+)</text>
        <dbReference type="Rhea" id="RHEA:46608"/>
        <dbReference type="Rhea" id="RHEA-COMP:11060"/>
        <dbReference type="Rhea" id="RHEA-COMP:11605"/>
        <dbReference type="ChEBI" id="CHEBI:15378"/>
        <dbReference type="ChEBI" id="CHEBI:30013"/>
        <dbReference type="ChEBI" id="CHEBI:30616"/>
        <dbReference type="ChEBI" id="CHEBI:61977"/>
        <dbReference type="ChEBI" id="CHEBI:456216"/>
        <dbReference type="EC" id="2.7.11.1"/>
    </reaction>
</comment>
<comment type="subcellular location">
    <subcellularLocation>
        <location evidence="5">Cytoplasm</location>
    </subcellularLocation>
</comment>
<comment type="miscellaneous">
    <text evidence="6">Present with 300 molecules/cell in log phase SD medium.</text>
</comment>
<comment type="similarity">
    <text evidence="1">Belongs to the protein kinase superfamily. Ser/Thr protein kinase family.</text>
</comment>
<proteinExistence type="evidence at protein level"/>
<dbReference type="EC" id="2.7.11.1"/>
<dbReference type="EMBL" id="Z75175">
    <property type="protein sequence ID" value="CAA99490.1"/>
    <property type="molecule type" value="Genomic_DNA"/>
</dbReference>
<dbReference type="EMBL" id="X89633">
    <property type="protein sequence ID" value="CAA61794.1"/>
    <property type="molecule type" value="Genomic_DNA"/>
</dbReference>
<dbReference type="EMBL" id="Z75176">
    <property type="protein sequence ID" value="CAA99492.1"/>
    <property type="molecule type" value="Genomic_DNA"/>
</dbReference>
<dbReference type="EMBL" id="BK006948">
    <property type="protein sequence ID" value="DAA11033.1"/>
    <property type="molecule type" value="Genomic_DNA"/>
</dbReference>
<dbReference type="PIR" id="S67164">
    <property type="entry name" value="S67164"/>
</dbReference>
<dbReference type="RefSeq" id="NP_014910.1">
    <property type="nucleotide sequence ID" value="NM_001183686.1"/>
</dbReference>
<dbReference type="SMR" id="Q08732"/>
<dbReference type="BioGRID" id="34656">
    <property type="interactions" value="183"/>
</dbReference>
<dbReference type="DIP" id="DIP-6454N"/>
<dbReference type="FunCoup" id="Q08732">
    <property type="interactions" value="403"/>
</dbReference>
<dbReference type="IntAct" id="Q08732">
    <property type="interactions" value="60"/>
</dbReference>
<dbReference type="MINT" id="Q08732"/>
<dbReference type="STRING" id="4932.YOR267C"/>
<dbReference type="GlyGen" id="Q08732">
    <property type="glycosylation" value="2 sites, 1 O-linked glycan (2 sites)"/>
</dbReference>
<dbReference type="iPTMnet" id="Q08732"/>
<dbReference type="PaxDb" id="4932-YOR267C"/>
<dbReference type="PeptideAtlas" id="Q08732"/>
<dbReference type="EnsemblFungi" id="YOR267C_mRNA">
    <property type="protein sequence ID" value="YOR267C"/>
    <property type="gene ID" value="YOR267C"/>
</dbReference>
<dbReference type="GeneID" id="854441"/>
<dbReference type="KEGG" id="sce:YOR267C"/>
<dbReference type="AGR" id="SGD:S000005793"/>
<dbReference type="SGD" id="S000005793">
    <property type="gene designation" value="HRK1"/>
</dbReference>
<dbReference type="VEuPathDB" id="FungiDB:YOR267C"/>
<dbReference type="eggNOG" id="KOG0590">
    <property type="taxonomic scope" value="Eukaryota"/>
</dbReference>
<dbReference type="HOGENOM" id="CLU_000288_82_2_1"/>
<dbReference type="InParanoid" id="Q08732"/>
<dbReference type="OMA" id="EYAKKCT"/>
<dbReference type="OrthoDB" id="6513151at2759"/>
<dbReference type="BioCyc" id="YEAST:G3O-33757-MONOMER"/>
<dbReference type="BioGRID-ORCS" id="854441">
    <property type="hits" value="0 hits in 13 CRISPR screens"/>
</dbReference>
<dbReference type="PRO" id="PR:Q08732"/>
<dbReference type="Proteomes" id="UP000002311">
    <property type="component" value="Chromosome XV"/>
</dbReference>
<dbReference type="RNAct" id="Q08732">
    <property type="molecule type" value="protein"/>
</dbReference>
<dbReference type="GO" id="GO:0005737">
    <property type="term" value="C:cytoplasm"/>
    <property type="evidence" value="ECO:0007005"/>
    <property type="project" value="SGD"/>
</dbReference>
<dbReference type="GO" id="GO:0005524">
    <property type="term" value="F:ATP binding"/>
    <property type="evidence" value="ECO:0007669"/>
    <property type="project" value="UniProtKB-KW"/>
</dbReference>
<dbReference type="GO" id="GO:0004672">
    <property type="term" value="F:protein kinase activity"/>
    <property type="evidence" value="ECO:0007005"/>
    <property type="project" value="SGD"/>
</dbReference>
<dbReference type="GO" id="GO:0106310">
    <property type="term" value="F:protein serine kinase activity"/>
    <property type="evidence" value="ECO:0007669"/>
    <property type="project" value="RHEA"/>
</dbReference>
<dbReference type="GO" id="GO:0004674">
    <property type="term" value="F:protein serine/threonine kinase activity"/>
    <property type="evidence" value="ECO:0000250"/>
    <property type="project" value="SGD"/>
</dbReference>
<dbReference type="GO" id="GO:0006873">
    <property type="term" value="P:intracellular monoatomic ion homeostasis"/>
    <property type="evidence" value="ECO:0000315"/>
    <property type="project" value="SGD"/>
</dbReference>
<dbReference type="FunFam" id="1.10.510.10:FF:001539">
    <property type="entry name" value="HRK1p Protein kinase"/>
    <property type="match status" value="1"/>
</dbReference>
<dbReference type="FunFam" id="1.10.510.10:FF:001502">
    <property type="entry name" value="Serine/threonine-protein kinase HRK1"/>
    <property type="match status" value="1"/>
</dbReference>
<dbReference type="Gene3D" id="1.10.510.10">
    <property type="entry name" value="Transferase(Phosphotransferase) domain 1"/>
    <property type="match status" value="2"/>
</dbReference>
<dbReference type="InterPro" id="IPR011009">
    <property type="entry name" value="Kinase-like_dom_sf"/>
</dbReference>
<dbReference type="InterPro" id="IPR000719">
    <property type="entry name" value="Prot_kinase_dom"/>
</dbReference>
<dbReference type="InterPro" id="IPR017441">
    <property type="entry name" value="Protein_kinase_ATP_BS"/>
</dbReference>
<dbReference type="InterPro" id="IPR008271">
    <property type="entry name" value="Ser/Thr_kinase_AS"/>
</dbReference>
<dbReference type="PANTHER" id="PTHR24343">
    <property type="entry name" value="SERINE/THREONINE KINASE"/>
    <property type="match status" value="1"/>
</dbReference>
<dbReference type="PANTHER" id="PTHR24343:SF137">
    <property type="entry name" value="SERINE_THREONINE-PROTEIN KINASE HRK1"/>
    <property type="match status" value="1"/>
</dbReference>
<dbReference type="Pfam" id="PF00069">
    <property type="entry name" value="Pkinase"/>
    <property type="match status" value="1"/>
</dbReference>
<dbReference type="SMART" id="SM00220">
    <property type="entry name" value="S_TKc"/>
    <property type="match status" value="1"/>
</dbReference>
<dbReference type="SUPFAM" id="SSF56112">
    <property type="entry name" value="Protein kinase-like (PK-like)"/>
    <property type="match status" value="1"/>
</dbReference>
<dbReference type="PROSITE" id="PS00107">
    <property type="entry name" value="PROTEIN_KINASE_ATP"/>
    <property type="match status" value="1"/>
</dbReference>
<dbReference type="PROSITE" id="PS50011">
    <property type="entry name" value="PROTEIN_KINASE_DOM"/>
    <property type="match status" value="1"/>
</dbReference>
<dbReference type="PROSITE" id="PS00108">
    <property type="entry name" value="PROTEIN_KINASE_ST"/>
    <property type="match status" value="1"/>
</dbReference>
<protein>
    <recommendedName>
        <fullName>Serine/threonine-protein kinase HRK1</fullName>
        <ecNumber>2.7.11.1</ecNumber>
    </recommendedName>
    <alternativeName>
        <fullName>Hygromycin resistance kinase 1</fullName>
    </alternativeName>
</protein>
<reference key="1">
    <citation type="journal article" date="1997" name="Yeast">
        <title>Sequencing analysis of a 36.8 kb fragment of yeast chromosome XV reveals 26 open reading frames including SEC63, CDC31, SUG2, GCD1, RBL2, PNT1, PAC1 and VPH1.</title>
        <authorList>
            <person name="Poirey R."/>
            <person name="Jauniaux J.-C."/>
        </authorList>
    </citation>
    <scope>NUCLEOTIDE SEQUENCE [GENOMIC DNA]</scope>
    <source>
        <strain>ATCC 96604 / S288c / FY1679</strain>
    </source>
</reference>
<reference key="2">
    <citation type="journal article" date="1997" name="Nature">
        <title>The nucleotide sequence of Saccharomyces cerevisiae chromosome XV.</title>
        <authorList>
            <person name="Dujon B."/>
            <person name="Albermann K."/>
            <person name="Aldea M."/>
            <person name="Alexandraki D."/>
            <person name="Ansorge W."/>
            <person name="Arino J."/>
            <person name="Benes V."/>
            <person name="Bohn C."/>
            <person name="Bolotin-Fukuhara M."/>
            <person name="Bordonne R."/>
            <person name="Boyer J."/>
            <person name="Camasses A."/>
            <person name="Casamayor A."/>
            <person name="Casas C."/>
            <person name="Cheret G."/>
            <person name="Cziepluch C."/>
            <person name="Daignan-Fornier B."/>
            <person name="Dang V.-D."/>
            <person name="de Haan M."/>
            <person name="Delius H."/>
            <person name="Durand P."/>
            <person name="Fairhead C."/>
            <person name="Feldmann H."/>
            <person name="Gaillon L."/>
            <person name="Galisson F."/>
            <person name="Gamo F.-J."/>
            <person name="Gancedo C."/>
            <person name="Goffeau A."/>
            <person name="Goulding S.E."/>
            <person name="Grivell L.A."/>
            <person name="Habbig B."/>
            <person name="Hand N.J."/>
            <person name="Hani J."/>
            <person name="Hattenhorst U."/>
            <person name="Hebling U."/>
            <person name="Hernando Y."/>
            <person name="Herrero E."/>
            <person name="Heumann K."/>
            <person name="Hiesel R."/>
            <person name="Hilger F."/>
            <person name="Hofmann B."/>
            <person name="Hollenberg C.P."/>
            <person name="Hughes B."/>
            <person name="Jauniaux J.-C."/>
            <person name="Kalogeropoulos A."/>
            <person name="Katsoulou C."/>
            <person name="Kordes E."/>
            <person name="Lafuente M.J."/>
            <person name="Landt O."/>
            <person name="Louis E.J."/>
            <person name="Maarse A.C."/>
            <person name="Madania A."/>
            <person name="Mannhaupt G."/>
            <person name="Marck C."/>
            <person name="Martin R.P."/>
            <person name="Mewes H.-W."/>
            <person name="Michaux G."/>
            <person name="Paces V."/>
            <person name="Parle-McDermott A.G."/>
            <person name="Pearson B.M."/>
            <person name="Perrin A."/>
            <person name="Pettersson B."/>
            <person name="Poch O."/>
            <person name="Pohl T.M."/>
            <person name="Poirey R."/>
            <person name="Portetelle D."/>
            <person name="Pujol A."/>
            <person name="Purnelle B."/>
            <person name="Ramezani Rad M."/>
            <person name="Rechmann S."/>
            <person name="Schwager C."/>
            <person name="Schweizer M."/>
            <person name="Sor F."/>
            <person name="Sterky F."/>
            <person name="Tarassov I.A."/>
            <person name="Teodoru C."/>
            <person name="Tettelin H."/>
            <person name="Thierry A."/>
            <person name="Tobiasch E."/>
            <person name="Tzermia M."/>
            <person name="Uhlen M."/>
            <person name="Unseld M."/>
            <person name="Valens M."/>
            <person name="Vandenbol M."/>
            <person name="Vetter I."/>
            <person name="Vlcek C."/>
            <person name="Voet M."/>
            <person name="Volckaert G."/>
            <person name="Voss H."/>
            <person name="Wambutt R."/>
            <person name="Wedler H."/>
            <person name="Wiemann S."/>
            <person name="Winsor B."/>
            <person name="Wolfe K.H."/>
            <person name="Zollner A."/>
            <person name="Zumstein E."/>
            <person name="Kleine K."/>
        </authorList>
    </citation>
    <scope>NUCLEOTIDE SEQUENCE [LARGE SCALE GENOMIC DNA]</scope>
    <source>
        <strain>ATCC 204508 / S288c</strain>
    </source>
</reference>
<reference key="3">
    <citation type="journal article" date="2014" name="G3 (Bethesda)">
        <title>The reference genome sequence of Saccharomyces cerevisiae: Then and now.</title>
        <authorList>
            <person name="Engel S.R."/>
            <person name="Dietrich F.S."/>
            <person name="Fisk D.G."/>
            <person name="Binkley G."/>
            <person name="Balakrishnan R."/>
            <person name="Costanzo M.C."/>
            <person name="Dwight S.S."/>
            <person name="Hitz B.C."/>
            <person name="Karra K."/>
            <person name="Nash R.S."/>
            <person name="Weng S."/>
            <person name="Wong E.D."/>
            <person name="Lloyd P."/>
            <person name="Skrzypek M.S."/>
            <person name="Miyasato S.R."/>
            <person name="Simison M."/>
            <person name="Cherry J.M."/>
        </authorList>
    </citation>
    <scope>GENOME REANNOTATION</scope>
    <source>
        <strain>ATCC 204508 / S288c</strain>
    </source>
</reference>
<reference key="4">
    <citation type="journal article" date="1996" name="Yeast">
        <title>DNA sequence analysis of the VPH1-SNF2 region on chromosome XV of Saccharomyces cerevisiae.</title>
        <authorList>
            <person name="Cheret G."/>
            <person name="Bernardi A."/>
            <person name="Sor F.J."/>
        </authorList>
    </citation>
    <scope>NUCLEOTIDE SEQUENCE [GENOMIC DNA] OF 1-368</scope>
    <source>
        <strain>ATCC 204508 / S288c</strain>
    </source>
</reference>
<reference key="5">
    <citation type="journal article" date="2000" name="Mol. Cell. Biol.">
        <title>Regulation of yeast H(+)-ATPase by protein kinases belonging to a family dedicated to activation of plasma membrane transporters.</title>
        <authorList>
            <person name="Goossens A."/>
            <person name="de La Fuente N."/>
            <person name="Forment J."/>
            <person name="Serrano R."/>
            <person name="Portillo F."/>
        </authorList>
    </citation>
    <scope>FUNCTION</scope>
</reference>
<reference key="6">
    <citation type="journal article" date="2003" name="Nature">
        <title>Global analysis of protein localization in budding yeast.</title>
        <authorList>
            <person name="Huh W.-K."/>
            <person name="Falvo J.V."/>
            <person name="Gerke L.C."/>
            <person name="Carroll A.S."/>
            <person name="Howson R.W."/>
            <person name="Weissman J.S."/>
            <person name="O'Shea E.K."/>
        </authorList>
    </citation>
    <scope>SUBCELLULAR LOCATION [LARGE SCALE ANALYSIS]</scope>
</reference>
<reference key="7">
    <citation type="journal article" date="2003" name="Nature">
        <title>Global analysis of protein expression in yeast.</title>
        <authorList>
            <person name="Ghaemmaghami S."/>
            <person name="Huh W.-K."/>
            <person name="Bower K."/>
            <person name="Howson R.W."/>
            <person name="Belle A."/>
            <person name="Dephoure N."/>
            <person name="O'Shea E.K."/>
            <person name="Weissman J.S."/>
        </authorList>
    </citation>
    <scope>LEVEL OF PROTEIN EXPRESSION [LARGE SCALE ANALYSIS]</scope>
</reference>
<reference key="8">
    <citation type="journal article" date="2007" name="J. Proteome Res.">
        <title>Large-scale phosphorylation analysis of alpha-factor-arrested Saccharomyces cerevisiae.</title>
        <authorList>
            <person name="Li X."/>
            <person name="Gerber S.A."/>
            <person name="Rudner A.D."/>
            <person name="Beausoleil S.A."/>
            <person name="Haas W."/>
            <person name="Villen J."/>
            <person name="Elias J.E."/>
            <person name="Gygi S.P."/>
        </authorList>
    </citation>
    <scope>PHOSPHORYLATION [LARGE SCALE ANALYSIS] AT SER-37; THR-495 AND SER-498</scope>
    <scope>IDENTIFICATION BY MASS SPECTROMETRY [LARGE SCALE ANALYSIS]</scope>
    <source>
        <strain>ADR376</strain>
    </source>
</reference>
<reference key="9">
    <citation type="journal article" date="2007" name="Proc. Natl. Acad. Sci. U.S.A.">
        <title>Analysis of phosphorylation sites on proteins from Saccharomyces cerevisiae by electron transfer dissociation (ETD) mass spectrometry.</title>
        <authorList>
            <person name="Chi A."/>
            <person name="Huttenhower C."/>
            <person name="Geer L.Y."/>
            <person name="Coon J.J."/>
            <person name="Syka J.E.P."/>
            <person name="Bai D.L."/>
            <person name="Shabanowitz J."/>
            <person name="Burke D.J."/>
            <person name="Troyanskaya O.G."/>
            <person name="Hunt D.F."/>
        </authorList>
    </citation>
    <scope>IDENTIFICATION BY MASS SPECTROMETRY [LARGE SCALE ANALYSIS]</scope>
</reference>
<reference key="10">
    <citation type="journal article" date="2008" name="Mol. Cell. Proteomics">
        <title>A multidimensional chromatography technology for in-depth phosphoproteome analysis.</title>
        <authorList>
            <person name="Albuquerque C.P."/>
            <person name="Smolka M.B."/>
            <person name="Payne S.H."/>
            <person name="Bafna V."/>
            <person name="Eng J."/>
            <person name="Zhou H."/>
        </authorList>
    </citation>
    <scope>PHOSPHORYLATION [LARGE SCALE ANALYSIS] AT SER-382; SER-472 AND SER-498</scope>
    <scope>IDENTIFICATION BY MASS SPECTROMETRY [LARGE SCALE ANALYSIS]</scope>
</reference>
<reference key="11">
    <citation type="journal article" date="2009" name="Science">
        <title>Global analysis of Cdk1 substrate phosphorylation sites provides insights into evolution.</title>
        <authorList>
            <person name="Holt L.J."/>
            <person name="Tuch B.B."/>
            <person name="Villen J."/>
            <person name="Johnson A.D."/>
            <person name="Gygi S.P."/>
            <person name="Morgan D.O."/>
        </authorList>
    </citation>
    <scope>PHOSPHORYLATION [LARGE SCALE ANALYSIS] AT SER-37 AND SER-498</scope>
    <scope>IDENTIFICATION BY MASS SPECTROMETRY [LARGE SCALE ANALYSIS]</scope>
</reference>
<sequence length="759" mass="85696">MPNLLSRNPFHGHHNDHHHDRENSSNNPPQLIRSSKSFLNFIGRKQSNDSLRSEKSTDSMKSTTTTTNYTTTNLNNNTHSHSNATSISTNNYNNNYETNHHHNISHGLHDYTSPASPKQTHSMAELKRFFRPSVNKKLSMSQLRSKKHSTHSPPPSKSTSTVNLNNHYRAQHPHGFTDHYAHTQSAIPPSTDSILSLSNNINIYHDDCILAQKYGKLGKLLGSGAGGSVKVLVRPTDGATFAVKEFRPRKPNESVKEYAKKCTAEFCIGSTLHHPNVIETVDVFSDSKQNKYYEVMEYCPIDFFAVVMTGKMSRGEINCCLKQLTEGVKYLHSMGLAHRDLKLDNCVMTSQGILKLIDFGSAVVFRYPFEDGVTMAHGIVGSDPYLAPEVITSTKSYDPQCVDIWSIGIIYCCMVLKRFPWKAPRDSDDNFRLYCMPDDIEHDYVESARHHEELLKERKEKRQRFLNHSDCSAINQQQPAHESNLKTVQNQVPNTPASIQGKSDNKPDIVEEETEENKEDDSNNDKESTPDNDKESTIDIKISKNENKSTVVSANPKKVDADADADCDANGDSNGRVDCKANSDCNDKTDCNANNDCSNESDCNAKVDTNVNTAANANPDMVPQNNPQQQQQQQQQQQQQQQQQQQQHHHHQHQNQDKAHSIASDNKSSQQHRGPHHKKIIHGPYRLLRLLPHASRPIMSRILQVDPKKRATLDDIFNDEWFAAIAACTMDSKNKVIRAPGHHHTLVREENAHLETYKV</sequence>
<gene>
    <name type="primary">HRK1</name>
    <name type="ordered locus">YOR267C</name>
</gene>
<keyword id="KW-0067">ATP-binding</keyword>
<keyword id="KW-0963">Cytoplasm</keyword>
<keyword id="KW-0418">Kinase</keyword>
<keyword id="KW-0547">Nucleotide-binding</keyword>
<keyword id="KW-0597">Phosphoprotein</keyword>
<keyword id="KW-1185">Reference proteome</keyword>
<keyword id="KW-0723">Serine/threonine-protein kinase</keyword>
<keyword id="KW-0808">Transferase</keyword>
<name>HRK1_YEAST</name>
<organism>
    <name type="scientific">Saccharomyces cerevisiae (strain ATCC 204508 / S288c)</name>
    <name type="common">Baker's yeast</name>
    <dbReference type="NCBI Taxonomy" id="559292"/>
    <lineage>
        <taxon>Eukaryota</taxon>
        <taxon>Fungi</taxon>
        <taxon>Dikarya</taxon>
        <taxon>Ascomycota</taxon>
        <taxon>Saccharomycotina</taxon>
        <taxon>Saccharomycetes</taxon>
        <taxon>Saccharomycetales</taxon>
        <taxon>Saccharomycetaceae</taxon>
        <taxon>Saccharomyces</taxon>
    </lineage>
</organism>
<feature type="chain" id="PRO_0000086002" description="Serine/threonine-protein kinase HRK1">
    <location>
        <begin position="1"/>
        <end position="759"/>
    </location>
</feature>
<feature type="domain" description="Protein kinase" evidence="1">
    <location>
        <begin position="215"/>
        <end position="722"/>
    </location>
</feature>
<feature type="region of interest" description="Disordered" evidence="3">
    <location>
        <begin position="1"/>
        <end position="32"/>
    </location>
</feature>
<feature type="region of interest" description="Disordered" evidence="3">
    <location>
        <begin position="45"/>
        <end position="162"/>
    </location>
</feature>
<feature type="region of interest" description="Disordered" evidence="3">
    <location>
        <begin position="493"/>
        <end position="578"/>
    </location>
</feature>
<feature type="region of interest" description="Disordered" evidence="3">
    <location>
        <begin position="614"/>
        <end position="682"/>
    </location>
</feature>
<feature type="compositionally biased region" description="Low complexity" evidence="3">
    <location>
        <begin position="59"/>
        <end position="97"/>
    </location>
</feature>
<feature type="compositionally biased region" description="Polar residues" evidence="3">
    <location>
        <begin position="113"/>
        <end position="122"/>
    </location>
</feature>
<feature type="compositionally biased region" description="Polar residues" evidence="3">
    <location>
        <begin position="493"/>
        <end position="502"/>
    </location>
</feature>
<feature type="compositionally biased region" description="Acidic residues" evidence="3">
    <location>
        <begin position="510"/>
        <end position="519"/>
    </location>
</feature>
<feature type="compositionally biased region" description="Basic and acidic residues" evidence="3">
    <location>
        <begin position="520"/>
        <end position="547"/>
    </location>
</feature>
<feature type="compositionally biased region" description="Low complexity" evidence="3">
    <location>
        <begin position="614"/>
        <end position="646"/>
    </location>
</feature>
<feature type="compositionally biased region" description="Polar residues" evidence="3">
    <location>
        <begin position="663"/>
        <end position="672"/>
    </location>
</feature>
<feature type="active site" description="Proton acceptor" evidence="1 2">
    <location>
        <position position="340"/>
    </location>
</feature>
<feature type="binding site" evidence="1">
    <location>
        <begin position="221"/>
        <end position="229"/>
    </location>
    <ligand>
        <name>ATP</name>
        <dbReference type="ChEBI" id="CHEBI:30616"/>
    </ligand>
</feature>
<feature type="binding site" evidence="1">
    <location>
        <position position="244"/>
    </location>
    <ligand>
        <name>ATP</name>
        <dbReference type="ChEBI" id="CHEBI:30616"/>
    </ligand>
</feature>
<feature type="modified residue" description="Phosphoserine" evidence="7 9">
    <location>
        <position position="37"/>
    </location>
</feature>
<feature type="modified residue" description="Phosphoserine" evidence="8">
    <location>
        <position position="382"/>
    </location>
</feature>
<feature type="modified residue" description="Phosphoserine" evidence="8">
    <location>
        <position position="472"/>
    </location>
</feature>
<feature type="modified residue" description="Phosphothreonine" evidence="7">
    <location>
        <position position="495"/>
    </location>
</feature>
<feature type="modified residue" description="Phosphoserine" evidence="7 8 9">
    <location>
        <position position="498"/>
    </location>
</feature>